<reference key="1">
    <citation type="journal article" date="2004" name="Genome Res.">
        <title>The status, quality, and expansion of the NIH full-length cDNA project: the Mammalian Gene Collection (MGC).</title>
        <authorList>
            <consortium name="The MGC Project Team"/>
        </authorList>
    </citation>
    <scope>NUCLEOTIDE SEQUENCE [LARGE SCALE MRNA]</scope>
    <source>
        <tissue>Testis</tissue>
    </source>
</reference>
<reference key="2">
    <citation type="journal article" date="2009" name="Reproduction">
        <title>Identification of novel immunodominant epididymal sperm proteins using combinatorial approach.</title>
        <authorList>
            <person name="Khan S.A."/>
            <person name="Suryawanshi A.R."/>
            <person name="Ranpura S.A."/>
            <person name="Jadhav S.V."/>
            <person name="Khole V.V."/>
        </authorList>
    </citation>
    <scope>IDENTIFICATION BY MASS SPECTROMETRY</scope>
    <scope>TISSUE SPECIFICITY</scope>
    <source>
        <strain>Holtzman</strain>
        <tissue>Epididymis</tissue>
        <tissue>Sperm</tissue>
    </source>
</reference>
<reference key="3">
    <citation type="journal article" date="2010" name="Antioxid. Redox Signal.">
        <title>PAMM: a redox regulatory protein that modulates osteoclast differentiation.</title>
        <authorList>
            <person name="Xu Y."/>
            <person name="Morse L.R."/>
            <person name="da Silva R.A."/>
            <person name="Odgren P.R."/>
            <person name="Sasaki H."/>
            <person name="Stashenko P."/>
            <person name="Battaglino R.A."/>
        </authorList>
    </citation>
    <scope>TISSUE SPECIFICITY</scope>
    <scope>INDUCTION</scope>
</reference>
<protein>
    <recommendedName>
        <fullName>Peroxiredoxin-like 2A</fullName>
    </recommendedName>
    <alternativeName>
        <fullName>Peroxiredoxin-like 2 activated in M-CSF stimulated monocytes</fullName>
        <shortName>Protein PAMM</shortName>
    </alternativeName>
    <alternativeName>
        <fullName>Redox-regulatory protein FAM213A</fullName>
    </alternativeName>
    <alternativeName>
        <fullName>Sperm head protein 1</fullName>
    </alternativeName>
</protein>
<feature type="chain" id="PRO_0000019552" description="Peroxiredoxin-like 2A">
    <location>
        <begin position="1"/>
        <end position="229"/>
    </location>
</feature>
<feature type="region of interest" description="Thioredoxin fold" evidence="1">
    <location>
        <begin position="14"/>
        <end position="112"/>
    </location>
</feature>
<feature type="active site" description="Redox-active" evidence="1">
    <location>
        <position position="85"/>
    </location>
</feature>
<feature type="active site" description="Redox-active" evidence="1">
    <location>
        <position position="88"/>
    </location>
</feature>
<sequence>MSFLQDSSFFSMGMWSIGVGAFGAAALALLLANTDMFLSKPQKAALEYLEDIDLKTLEKEPRTFKAKELWEKNGAVIMAVRRPGCFLCRAEAADLMSLKPKLDELGVPLYAVVKEKVKREVEDFQPYFKGEIFLDEKKKFYGPERRKMMLMGLVRLGVWYNSFRAWKGGFSGNFEGEGFILGGVFVIGSGKQGVLLEHREKEFGDRVNLLSVLEAVKKIKPQTPASRQS</sequence>
<keyword id="KW-0049">Antioxidant</keyword>
<keyword id="KW-0963">Cytoplasm</keyword>
<keyword id="KW-0676">Redox-active center</keyword>
<keyword id="KW-1185">Reference proteome</keyword>
<keyword id="KW-0964">Secreted</keyword>
<organism>
    <name type="scientific">Rattus norvegicus</name>
    <name type="common">Rat</name>
    <dbReference type="NCBI Taxonomy" id="10116"/>
    <lineage>
        <taxon>Eukaryota</taxon>
        <taxon>Metazoa</taxon>
        <taxon>Chordata</taxon>
        <taxon>Craniata</taxon>
        <taxon>Vertebrata</taxon>
        <taxon>Euteleostomi</taxon>
        <taxon>Mammalia</taxon>
        <taxon>Eutheria</taxon>
        <taxon>Euarchontoglires</taxon>
        <taxon>Glires</taxon>
        <taxon>Rodentia</taxon>
        <taxon>Myomorpha</taxon>
        <taxon>Muroidea</taxon>
        <taxon>Muridae</taxon>
        <taxon>Murinae</taxon>
        <taxon>Rattus</taxon>
    </lineage>
</organism>
<comment type="function">
    <text evidence="2">Involved in redox regulation of the cell. Acts as an antioxidant. Inhibits TNFSF11-induced NFKB1 and JUN activation and osteoclast differentiation. May affect bone resorption and help to maintain bone mass. Acts as a negative regulator of macrophage-mediated inflammation by inhibiting macrophage production of inflammatory cytokines, probably through suppression of the MAPK signaling pathway.</text>
</comment>
<comment type="subcellular location">
    <subcellularLocation>
        <location evidence="2">Cytoplasm</location>
    </subcellularLocation>
    <subcellularLocation>
        <location evidence="2">Secreted</location>
    </subcellularLocation>
    <text evidence="2">Secreted from mature adipocytes but not from preadipocytes.</text>
</comment>
<comment type="tissue specificity">
    <text evidence="3 4">Expressed by the principal cells of the epididymis. Detected in the head region of epididymal sperm (at protein level). Expressed in bone marrow.</text>
</comment>
<comment type="induction">
    <text evidence="4">Up-regulated on CSF1 treatment.</text>
</comment>
<comment type="miscellaneous">
    <text>The active site cysteines correspond to the redox-active cysteines of peroxiredoxins.</text>
</comment>
<comment type="similarity">
    <text evidence="5">Belongs to the peroxiredoxin-like PRXL2 family. PRXL2A subfamily.</text>
</comment>
<accession>Q6AXX6</accession>
<accession>P85300</accession>
<proteinExistence type="evidence at protein level"/>
<dbReference type="EMBL" id="BC079275">
    <property type="protein sequence ID" value="AAH79275.1"/>
    <property type="molecule type" value="mRNA"/>
</dbReference>
<dbReference type="RefSeq" id="NP_001014162.1">
    <property type="nucleotide sequence ID" value="NM_001014140.1"/>
</dbReference>
<dbReference type="RefSeq" id="XP_006252853.1">
    <property type="nucleotide sequence ID" value="XM_006252791.5"/>
</dbReference>
<dbReference type="SMR" id="Q6AXX6"/>
<dbReference type="BioGRID" id="262452">
    <property type="interactions" value="1"/>
</dbReference>
<dbReference type="FunCoup" id="Q6AXX6">
    <property type="interactions" value="242"/>
</dbReference>
<dbReference type="IntAct" id="Q6AXX6">
    <property type="interactions" value="1"/>
</dbReference>
<dbReference type="MINT" id="Q6AXX6"/>
<dbReference type="STRING" id="10116.ENSRNOP00000014819"/>
<dbReference type="iPTMnet" id="Q6AXX6"/>
<dbReference type="PhosphoSitePlus" id="Q6AXX6"/>
<dbReference type="jPOST" id="Q6AXX6"/>
<dbReference type="PaxDb" id="10116-ENSRNOP00000014819"/>
<dbReference type="GeneID" id="361118"/>
<dbReference type="KEGG" id="rno:361118"/>
<dbReference type="UCSC" id="RGD:1309676">
    <property type="organism name" value="rat"/>
</dbReference>
<dbReference type="AGR" id="RGD:1309676"/>
<dbReference type="CTD" id="84293"/>
<dbReference type="RGD" id="1309676">
    <property type="gene designation" value="Prxl2a"/>
</dbReference>
<dbReference type="VEuPathDB" id="HostDB:ENSRNOG00000011140"/>
<dbReference type="eggNOG" id="KOG4498">
    <property type="taxonomic scope" value="Eukaryota"/>
</dbReference>
<dbReference type="HOGENOM" id="CLU_086062_0_0_1"/>
<dbReference type="InParanoid" id="Q6AXX6"/>
<dbReference type="OrthoDB" id="36519at9989"/>
<dbReference type="PhylomeDB" id="Q6AXX6"/>
<dbReference type="TreeFam" id="TF313804"/>
<dbReference type="PRO" id="PR:Q6AXX6"/>
<dbReference type="Proteomes" id="UP000002494">
    <property type="component" value="Chromosome 16"/>
</dbReference>
<dbReference type="Bgee" id="ENSRNOG00000011140">
    <property type="expression patterns" value="Expressed in testis and 20 other cell types or tissues"/>
</dbReference>
<dbReference type="GO" id="GO:0005737">
    <property type="term" value="C:cytoplasm"/>
    <property type="evidence" value="ECO:0000266"/>
    <property type="project" value="RGD"/>
</dbReference>
<dbReference type="GO" id="GO:0005576">
    <property type="term" value="C:extracellular region"/>
    <property type="evidence" value="ECO:0007669"/>
    <property type="project" value="UniProtKB-SubCell"/>
</dbReference>
<dbReference type="GO" id="GO:0016209">
    <property type="term" value="F:antioxidant activity"/>
    <property type="evidence" value="ECO:0000266"/>
    <property type="project" value="RGD"/>
</dbReference>
<dbReference type="GO" id="GO:0045670">
    <property type="term" value="P:regulation of osteoclast differentiation"/>
    <property type="evidence" value="ECO:0000266"/>
    <property type="project" value="RGD"/>
</dbReference>
<dbReference type="CDD" id="cd02970">
    <property type="entry name" value="PRX_like2"/>
    <property type="match status" value="1"/>
</dbReference>
<dbReference type="FunFam" id="3.40.30.10:FF:000312">
    <property type="entry name" value="redox-regulatory protein FAM213A isoform X1"/>
    <property type="match status" value="1"/>
</dbReference>
<dbReference type="Gene3D" id="3.40.30.10">
    <property type="entry name" value="Glutaredoxin"/>
    <property type="match status" value="1"/>
</dbReference>
<dbReference type="InterPro" id="IPR032801">
    <property type="entry name" value="PXL2A/B/C"/>
</dbReference>
<dbReference type="InterPro" id="IPR036249">
    <property type="entry name" value="Thioredoxin-like_sf"/>
</dbReference>
<dbReference type="PANTHER" id="PTHR28630">
    <property type="match status" value="1"/>
</dbReference>
<dbReference type="PANTHER" id="PTHR28630:SF31">
    <property type="entry name" value="PEROXIREDOXIN-LIKE 2A"/>
    <property type="match status" value="1"/>
</dbReference>
<dbReference type="Pfam" id="PF13911">
    <property type="entry name" value="AhpC-TSA_2"/>
    <property type="match status" value="1"/>
</dbReference>
<dbReference type="SUPFAM" id="SSF52833">
    <property type="entry name" value="Thioredoxin-like"/>
    <property type="match status" value="1"/>
</dbReference>
<evidence type="ECO:0000250" key="1"/>
<evidence type="ECO:0000250" key="2">
    <source>
        <dbReference type="UniProtKB" id="Q9BRX8"/>
    </source>
</evidence>
<evidence type="ECO:0000269" key="3">
    <source>
    </source>
</evidence>
<evidence type="ECO:0000269" key="4">
    <source>
    </source>
</evidence>
<evidence type="ECO:0000305" key="5"/>
<evidence type="ECO:0000312" key="6">
    <source>
        <dbReference type="RGD" id="1309676"/>
    </source>
</evidence>
<gene>
    <name evidence="6" type="primary">Prxl2a</name>
    <name type="synonym">Fam213a</name>
    <name type="synonym">Pamm</name>
    <name type="synonym">Shp1</name>
</gene>
<name>PXL2A_RAT</name>